<feature type="chain" id="PRO_1000149741" description="UPF0259 membrane protein YciC">
    <location>
        <begin position="1"/>
        <end position="247"/>
    </location>
</feature>
<feature type="transmembrane region" description="Helical" evidence="1">
    <location>
        <begin position="20"/>
        <end position="40"/>
    </location>
</feature>
<feature type="transmembrane region" description="Helical" evidence="1">
    <location>
        <begin position="87"/>
        <end position="107"/>
    </location>
</feature>
<feature type="transmembrane region" description="Helical" evidence="1">
    <location>
        <begin position="116"/>
        <end position="138"/>
    </location>
</feature>
<feature type="transmembrane region" description="Helical" evidence="1">
    <location>
        <begin position="152"/>
        <end position="172"/>
    </location>
</feature>
<feature type="transmembrane region" description="Helical" evidence="1">
    <location>
        <begin position="185"/>
        <end position="207"/>
    </location>
</feature>
<feature type="transmembrane region" description="Helical" evidence="1">
    <location>
        <begin position="225"/>
        <end position="245"/>
    </location>
</feature>
<accession>B7UQE6</accession>
<comment type="subcellular location">
    <subcellularLocation>
        <location evidence="1">Cell inner membrane</location>
        <topology evidence="1">Multi-pass membrane protein</topology>
    </subcellularLocation>
</comment>
<comment type="similarity">
    <text evidence="1">Belongs to the UPF0259 family.</text>
</comment>
<name>YCIC_ECO27</name>
<gene>
    <name evidence="1" type="primary">yciC</name>
    <name type="ordered locus">E2348C_1382</name>
</gene>
<dbReference type="EMBL" id="FM180568">
    <property type="protein sequence ID" value="CAS08930.1"/>
    <property type="molecule type" value="Genomic_DNA"/>
</dbReference>
<dbReference type="RefSeq" id="WP_000028562.1">
    <property type="nucleotide sequence ID" value="NC_011601.1"/>
</dbReference>
<dbReference type="KEGG" id="ecg:E2348C_1382"/>
<dbReference type="HOGENOM" id="CLU_073287_0_0_6"/>
<dbReference type="Proteomes" id="UP000008205">
    <property type="component" value="Chromosome"/>
</dbReference>
<dbReference type="GO" id="GO:0005886">
    <property type="term" value="C:plasma membrane"/>
    <property type="evidence" value="ECO:0007669"/>
    <property type="project" value="UniProtKB-SubCell"/>
</dbReference>
<dbReference type="HAMAP" id="MF_01067">
    <property type="entry name" value="UPF0259"/>
    <property type="match status" value="1"/>
</dbReference>
<dbReference type="InterPro" id="IPR009627">
    <property type="entry name" value="UPF0259"/>
</dbReference>
<dbReference type="NCBIfam" id="NF002774">
    <property type="entry name" value="PRK02868.1"/>
    <property type="match status" value="1"/>
</dbReference>
<dbReference type="Pfam" id="PF06790">
    <property type="entry name" value="UPF0259"/>
    <property type="match status" value="1"/>
</dbReference>
<keyword id="KW-0997">Cell inner membrane</keyword>
<keyword id="KW-1003">Cell membrane</keyword>
<keyword id="KW-0472">Membrane</keyword>
<keyword id="KW-1185">Reference proteome</keyword>
<keyword id="KW-0812">Transmembrane</keyword>
<keyword id="KW-1133">Transmembrane helix</keyword>
<sequence length="247" mass="26297">MSITAQSVYRDTGNFFRNQFVTILLVSLLCAFITVVLGHVFSPSDAQLAQLNDGVPVSGSSGLFDLVQNMSPEQQQILLQASAASTFSGLIGNAILAGGVILIIQLVSAGQRVSALRAIGASAPILPKLFILIFLTTLLVQIGIMLVVVPGIIMAILLALAPVMLVQDKMGVFASMRSSMRLTWANIRLVAPAVLSWLLAKTLLLLFASSFAALTPAIGAVLANTLSNLISAVLLIYLFRLYMLIRQ</sequence>
<organism>
    <name type="scientific">Escherichia coli O127:H6 (strain E2348/69 / EPEC)</name>
    <dbReference type="NCBI Taxonomy" id="574521"/>
    <lineage>
        <taxon>Bacteria</taxon>
        <taxon>Pseudomonadati</taxon>
        <taxon>Pseudomonadota</taxon>
        <taxon>Gammaproteobacteria</taxon>
        <taxon>Enterobacterales</taxon>
        <taxon>Enterobacteriaceae</taxon>
        <taxon>Escherichia</taxon>
    </lineage>
</organism>
<protein>
    <recommendedName>
        <fullName evidence="1">UPF0259 membrane protein YciC</fullName>
    </recommendedName>
</protein>
<reference key="1">
    <citation type="journal article" date="2009" name="J. Bacteriol.">
        <title>Complete genome sequence and comparative genome analysis of enteropathogenic Escherichia coli O127:H6 strain E2348/69.</title>
        <authorList>
            <person name="Iguchi A."/>
            <person name="Thomson N.R."/>
            <person name="Ogura Y."/>
            <person name="Saunders D."/>
            <person name="Ooka T."/>
            <person name="Henderson I.R."/>
            <person name="Harris D."/>
            <person name="Asadulghani M."/>
            <person name="Kurokawa K."/>
            <person name="Dean P."/>
            <person name="Kenny B."/>
            <person name="Quail M.A."/>
            <person name="Thurston S."/>
            <person name="Dougan G."/>
            <person name="Hayashi T."/>
            <person name="Parkhill J."/>
            <person name="Frankel G."/>
        </authorList>
    </citation>
    <scope>NUCLEOTIDE SEQUENCE [LARGE SCALE GENOMIC DNA]</scope>
    <source>
        <strain>E2348/69 / EPEC</strain>
    </source>
</reference>
<evidence type="ECO:0000255" key="1">
    <source>
        <dbReference type="HAMAP-Rule" id="MF_01067"/>
    </source>
</evidence>
<proteinExistence type="inferred from homology"/>